<accession>Q17QF9</accession>
<gene>
    <name type="primary">CBLN3</name>
</gene>
<protein>
    <recommendedName>
        <fullName>Cerebellin-3</fullName>
    </recommendedName>
</protein>
<comment type="function">
    <text evidence="1">May be involved in synaptic functions in the CNS.</text>
</comment>
<comment type="subunit">
    <text evidence="2 3">Heterohexamer; disulfide-linked heterotrimers. Interacts with CBLN1. May also form oligomers with CBLN2 and CBLN4 (By similarity).</text>
</comment>
<comment type="subcellular location">
    <subcellularLocation>
        <location evidence="1">Endoplasmic reticulum</location>
    </subcellularLocation>
    <subcellularLocation>
        <location evidence="1">Golgi apparatus</location>
        <location evidence="1">cis-Golgi network</location>
    </subcellularLocation>
    <subcellularLocation>
        <location evidence="1">Secreted</location>
    </subcellularLocation>
    <subcellularLocation>
        <location evidence="1">Synapse</location>
    </subcellularLocation>
    <text evidence="1">In the absence of CBLN1, remains in the endoplasmic reticulum/cis-Golgi apparatus. Partial secretion depends on an association with CBLN1 and maybe CBLN4, but not on CBLN2 (By similarity).</text>
</comment>
<keyword id="KW-1015">Disulfide bond</keyword>
<keyword id="KW-0256">Endoplasmic reticulum</keyword>
<keyword id="KW-0325">Glycoprotein</keyword>
<keyword id="KW-0333">Golgi apparatus</keyword>
<keyword id="KW-1185">Reference proteome</keyword>
<keyword id="KW-0964">Secreted</keyword>
<keyword id="KW-0732">Signal</keyword>
<keyword id="KW-0770">Synapse</keyword>
<name>CBLN3_BOVIN</name>
<evidence type="ECO:0000250" key="1"/>
<evidence type="ECO:0000250" key="2">
    <source>
        <dbReference type="UniProtKB" id="Q9JHG0"/>
    </source>
</evidence>
<evidence type="ECO:0000250" key="3">
    <source>
        <dbReference type="UniProtKB" id="Q9R171"/>
    </source>
</evidence>
<evidence type="ECO:0000255" key="4"/>
<evidence type="ECO:0000255" key="5">
    <source>
        <dbReference type="PROSITE-ProRule" id="PRU00368"/>
    </source>
</evidence>
<feature type="signal peptide" evidence="4">
    <location>
        <begin position="1"/>
        <end position="32"/>
    </location>
</feature>
<feature type="chain" id="PRO_0000274217" description="Cerebellin-3">
    <location>
        <begin position="33"/>
        <end position="205"/>
    </location>
</feature>
<feature type="domain" description="C1q" evidence="5">
    <location>
        <begin position="67"/>
        <end position="205"/>
    </location>
</feature>
<feature type="glycosylation site" description="N-linked (GlcNAc...) asparagine" evidence="4">
    <location>
        <position position="90"/>
    </location>
</feature>
<feature type="disulfide bond" description="Interchain" evidence="3">
    <location>
        <position position="45"/>
    </location>
</feature>
<feature type="disulfide bond" description="Interchain" evidence="3">
    <location>
        <position position="49"/>
    </location>
</feature>
<dbReference type="EMBL" id="BC118385">
    <property type="protein sequence ID" value="AAI18386.1"/>
    <property type="molecule type" value="mRNA"/>
</dbReference>
<dbReference type="RefSeq" id="NP_001073071.1">
    <property type="nucleotide sequence ID" value="NM_001079603.1"/>
</dbReference>
<dbReference type="SMR" id="Q17QF9"/>
<dbReference type="FunCoup" id="Q17QF9">
    <property type="interactions" value="45"/>
</dbReference>
<dbReference type="STRING" id="9913.ENSBTAP00000057566"/>
<dbReference type="GlyCosmos" id="Q17QF9">
    <property type="glycosylation" value="1 site, No reported glycans"/>
</dbReference>
<dbReference type="GlyGen" id="Q17QF9">
    <property type="glycosylation" value="1 site"/>
</dbReference>
<dbReference type="PaxDb" id="9913-ENSBTAP00000014103"/>
<dbReference type="GeneID" id="529166"/>
<dbReference type="KEGG" id="bta:529166"/>
<dbReference type="CTD" id="643866"/>
<dbReference type="VEuPathDB" id="HostDB:ENSBTAG00000010665"/>
<dbReference type="eggNOG" id="ENOG502QVN9">
    <property type="taxonomic scope" value="Eukaryota"/>
</dbReference>
<dbReference type="InParanoid" id="Q17QF9"/>
<dbReference type="OMA" id="AKRHWPP"/>
<dbReference type="OrthoDB" id="6154955at2759"/>
<dbReference type="Proteomes" id="UP000009136">
    <property type="component" value="Chromosome 10"/>
</dbReference>
<dbReference type="Bgee" id="ENSBTAG00000010665">
    <property type="expression patterns" value="Expressed in abdominal lymph node and 91 other cell types or tissues"/>
</dbReference>
<dbReference type="GO" id="GO:0005783">
    <property type="term" value="C:endoplasmic reticulum"/>
    <property type="evidence" value="ECO:0007669"/>
    <property type="project" value="UniProtKB-SubCell"/>
</dbReference>
<dbReference type="GO" id="GO:0005576">
    <property type="term" value="C:extracellular region"/>
    <property type="evidence" value="ECO:0007669"/>
    <property type="project" value="UniProtKB-SubCell"/>
</dbReference>
<dbReference type="GO" id="GO:0005794">
    <property type="term" value="C:Golgi apparatus"/>
    <property type="evidence" value="ECO:0007669"/>
    <property type="project" value="UniProtKB-SubCell"/>
</dbReference>
<dbReference type="GO" id="GO:0045202">
    <property type="term" value="C:synapse"/>
    <property type="evidence" value="ECO:0000318"/>
    <property type="project" value="GO_Central"/>
</dbReference>
<dbReference type="GO" id="GO:0099558">
    <property type="term" value="P:maintenance of synapse structure"/>
    <property type="evidence" value="ECO:0000318"/>
    <property type="project" value="GO_Central"/>
</dbReference>
<dbReference type="FunFam" id="2.60.120.40:FF:000002">
    <property type="entry name" value="Cerebellin 4"/>
    <property type="match status" value="1"/>
</dbReference>
<dbReference type="Gene3D" id="2.60.120.40">
    <property type="match status" value="1"/>
</dbReference>
<dbReference type="InterPro" id="IPR001073">
    <property type="entry name" value="C1q_dom"/>
</dbReference>
<dbReference type="InterPro" id="IPR050822">
    <property type="entry name" value="Cerebellin_Synaptic_Org"/>
</dbReference>
<dbReference type="InterPro" id="IPR008983">
    <property type="entry name" value="Tumour_necrosis_fac-like_dom"/>
</dbReference>
<dbReference type="PANTHER" id="PTHR22923:SF2">
    <property type="entry name" value="CEREBELLIN-3"/>
    <property type="match status" value="1"/>
</dbReference>
<dbReference type="PANTHER" id="PTHR22923">
    <property type="entry name" value="CEREBELLIN-RELATED"/>
    <property type="match status" value="1"/>
</dbReference>
<dbReference type="Pfam" id="PF00386">
    <property type="entry name" value="C1q"/>
    <property type="match status" value="1"/>
</dbReference>
<dbReference type="PRINTS" id="PR00007">
    <property type="entry name" value="COMPLEMNTC1Q"/>
</dbReference>
<dbReference type="SMART" id="SM00110">
    <property type="entry name" value="C1Q"/>
    <property type="match status" value="1"/>
</dbReference>
<dbReference type="SUPFAM" id="SSF49842">
    <property type="entry name" value="TNF-like"/>
    <property type="match status" value="1"/>
</dbReference>
<dbReference type="PROSITE" id="PS50871">
    <property type="entry name" value="C1Q"/>
    <property type="match status" value="1"/>
</dbReference>
<organism>
    <name type="scientific">Bos taurus</name>
    <name type="common">Bovine</name>
    <dbReference type="NCBI Taxonomy" id="9913"/>
    <lineage>
        <taxon>Eukaryota</taxon>
        <taxon>Metazoa</taxon>
        <taxon>Chordata</taxon>
        <taxon>Craniata</taxon>
        <taxon>Vertebrata</taxon>
        <taxon>Euteleostomi</taxon>
        <taxon>Mammalia</taxon>
        <taxon>Eutheria</taxon>
        <taxon>Laurasiatheria</taxon>
        <taxon>Artiodactyla</taxon>
        <taxon>Ruminantia</taxon>
        <taxon>Pecora</taxon>
        <taxon>Bovidae</taxon>
        <taxon>Bovinae</taxon>
        <taxon>Bos</taxon>
    </lineage>
</organism>
<proteinExistence type="evidence at transcript level"/>
<sequence>MLGTKRHWPPGPSLSLELPLALTLLALRAGWAQEGTEPVLLEGECLVVCEPGRAAAGGPGGAALGEAPPGRVAFAAVRSHHHEPAGEIGNGTSGAIYFDQVLVNEGGGFDRTSGSFVAPVRGVYSFRFHVVKVYNRQTVQVSLMLNTWPVVSAFANDPDVTREAATSSVLLPLDPGDRVSLRLRRGNLLGGWKYSSFSGFLIFPL</sequence>
<reference key="1">
    <citation type="submission" date="2006-06" db="EMBL/GenBank/DDBJ databases">
        <authorList>
            <consortium name="NIH - Mammalian Gene Collection (MGC) project"/>
        </authorList>
    </citation>
    <scope>NUCLEOTIDE SEQUENCE [LARGE SCALE MRNA]</scope>
    <source>
        <strain>Hereford</strain>
        <tissue>Fetal cerebellum</tissue>
    </source>
</reference>